<accession>A7Z019</accession>
<organism>
    <name type="scientific">Bos taurus</name>
    <name type="common">Bovine</name>
    <dbReference type="NCBI Taxonomy" id="9913"/>
    <lineage>
        <taxon>Eukaryota</taxon>
        <taxon>Metazoa</taxon>
        <taxon>Chordata</taxon>
        <taxon>Craniata</taxon>
        <taxon>Vertebrata</taxon>
        <taxon>Euteleostomi</taxon>
        <taxon>Mammalia</taxon>
        <taxon>Eutheria</taxon>
        <taxon>Laurasiatheria</taxon>
        <taxon>Artiodactyla</taxon>
        <taxon>Ruminantia</taxon>
        <taxon>Pecora</taxon>
        <taxon>Bovidae</taxon>
        <taxon>Bovinae</taxon>
        <taxon>Bos</taxon>
    </lineage>
</organism>
<sequence>MSTPDPALGGTPRPGPSPGPGPSPGAMLGPSPGPSPGSAHSIMGPSPGPPSAGHPIPTQGPGGYPQDNMHQMHKPMESMHEKGMSDDPRYTQMKGMGMRSGGHAGMGPPPSPMDQHSQGYPSPLGGSEHASSPVPASGPSSGPQMSSGPGGAPLDGADPQALGQQNRGPTPFNQNQLHQLRAQIMAYKMLARGQPLPDHLQMAVQGKRPMPGMQPQMPALPPPSVSATGPGPSPGPAPPNYSRPHGMGGPNMPPPGPSGVPPGMPGQPPGGPPKPWPEGPMANAAAPTSTPQKLIPPQPTGRPSPAPPAVPPAASPVMPPQTQSPGQPAQPAPMVPLHQKQSRITPIQKPRGLDPVEILQEREYRLQARIAHRIQELENLPGSLAGDLRTKATIELKALRLLNFQRQLRQEVVVCMRRDTALETALNAKAYKRSKRQSLREARITEKLEKQQKIEQERKRRQKHQEYLNSILQHAKDFKEYHRSVTGKIQKLTKAVATYHANTEREQKKENERIEKERMRRLMAEDEEGYRKLIDQKKDKRLAYLLQQTDEYVANLTELVRQHKAAQVAKEKKKKKKKKKAENAEGQTPAIGPDGEPLDETSQMSDLPVKVIHVESGKILTGTDAPKAGQLEAWLEMNPGYEVAPRSDSEESGSEEEEEEEEEEQPQPAQPPTLPVEEKKKIPDPDSDDVSEVDARHIIENAKQDVDDEYGVSQALARGLQSYYAVAHAVTERVDKQSALMVNGVLKQYQIKGLEWLVSLYNNNLNGILADEMGLGKTIQTIALITYLMEHKRINGPFLIIVPLSTLSNWAYEFDKWAPSVVKVSYKGSPAARRAFVPQLRSGKFNVLLTTYEYIIKDKHILAKIRWKYMIVDEGHRMKNHHCKLTQVLNTHYVAPRRLLLTGTPLQNKLPELWALLNFLLPTIFKSCSTFEQWFNAPFAMTGEKVDLNEEETILIIRRLHKVLRPFLLRRLKKEVEAQLPEKVEYVIKCDMSALQRVLYRHMQAKGVLLTDGSEKDKKGKGGTKTLMNTIMQLRKICNHPYMFQHIEESFSEHLGFTGGIVQGLDLYRASGKFELLDRILPKLRATNHKVLLFCQMTSLMTIMEDYFAYRGFKYLRLDGTTKAEDRGMLLKTFNEPGSEYFIFLLSTRAGGLGLNLQSADTVIIFDSDWNPHQDLQAQDRAHRIGQQNEVRVLRLCTVNSVEEKILAAAKYKLNVDQKVIQAGMFDQKSSSHERRAFLQAILEHEEQDEEEDEVPDDETVNQMIARHEEEFDLFMRMDLDRRREEARNPKRKPRLMEEDELPSWIIKDDAEVERLTCEEEEEKMFGRGSRHRKEVDYSDSLTEKQWLKAIEEGTLEEIEEEVRQKKSSRKRKRDSDAGPSTPTTSTRSRDKDDESKKQKKRGRPPAEKLSPNPPNLTKKMKKIVDAVIKYKDSSSGRQLSEVFIQLPSRKELPEYYELIRKPVDFKKIKERIRNHKYRSLNDLEKDVMLLCQNAQTFNLEGSLIYEDSIVLQSVFTSVRQKIEKEDDSEGEESEEEEEGEEEGSESESRSVKVKIKLGRKEKAQDRLKGGRRRPSRGSRAKPVVSDDDSEEEQEEDRSGSGSEED</sequence>
<dbReference type="EC" id="3.6.4.-" evidence="2"/>
<dbReference type="EMBL" id="BC153216">
    <property type="protein sequence ID" value="AAI53217.1"/>
    <property type="molecule type" value="mRNA"/>
</dbReference>
<dbReference type="RefSeq" id="NP_001099084.1">
    <property type="nucleotide sequence ID" value="NM_001105614.1"/>
</dbReference>
<dbReference type="SMR" id="A7Z019"/>
<dbReference type="FunCoup" id="A7Z019">
    <property type="interactions" value="4546"/>
</dbReference>
<dbReference type="STRING" id="9913.ENSBTAP00000059124"/>
<dbReference type="PaxDb" id="9913-ENSBTAP00000025598"/>
<dbReference type="GeneID" id="414274"/>
<dbReference type="KEGG" id="bta:414274"/>
<dbReference type="CTD" id="6597"/>
<dbReference type="VEuPathDB" id="HostDB:ENSBTAG00000019220"/>
<dbReference type="eggNOG" id="KOG0386">
    <property type="taxonomic scope" value="Eukaryota"/>
</dbReference>
<dbReference type="HOGENOM" id="CLU_000315_15_0_1"/>
<dbReference type="InParanoid" id="A7Z019"/>
<dbReference type="OrthoDB" id="6017at2759"/>
<dbReference type="Reactome" id="R-BTA-1266695">
    <property type="pathway name" value="Interleukin-7 signaling"/>
</dbReference>
<dbReference type="Reactome" id="R-BTA-201722">
    <property type="pathway name" value="Formation of the beta-catenin:TCF transactivating complex"/>
</dbReference>
<dbReference type="Reactome" id="R-BTA-3214858">
    <property type="pathway name" value="RMTs methylate histone arginines"/>
</dbReference>
<dbReference type="Reactome" id="R-BTA-3247509">
    <property type="pathway name" value="Chromatin modifying enzymes"/>
</dbReference>
<dbReference type="Reactome" id="R-BTA-8939243">
    <property type="pathway name" value="RUNX1 interacts with co-factors whose precise effect on RUNX1 targets is not known"/>
</dbReference>
<dbReference type="Proteomes" id="UP000009136">
    <property type="component" value="Chromosome 7"/>
</dbReference>
<dbReference type="Bgee" id="ENSBTAG00000019220">
    <property type="expression patterns" value="Expressed in thymus and 106 other cell types or tissues"/>
</dbReference>
<dbReference type="GO" id="GO:0000785">
    <property type="term" value="C:chromatin"/>
    <property type="evidence" value="ECO:0000318"/>
    <property type="project" value="GO_Central"/>
</dbReference>
<dbReference type="GO" id="GO:0071565">
    <property type="term" value="C:nBAF complex"/>
    <property type="evidence" value="ECO:0000250"/>
    <property type="project" value="UniProtKB"/>
</dbReference>
<dbReference type="GO" id="GO:0071564">
    <property type="term" value="C:npBAF complex"/>
    <property type="evidence" value="ECO:0000250"/>
    <property type="project" value="UniProtKB"/>
</dbReference>
<dbReference type="GO" id="GO:0005654">
    <property type="term" value="C:nucleoplasm"/>
    <property type="evidence" value="ECO:0007669"/>
    <property type="project" value="UniProtKB-ARBA"/>
</dbReference>
<dbReference type="GO" id="GO:0005634">
    <property type="term" value="C:nucleus"/>
    <property type="evidence" value="ECO:0000250"/>
    <property type="project" value="UniProtKB"/>
</dbReference>
<dbReference type="GO" id="GO:0016514">
    <property type="term" value="C:SWI/SNF complex"/>
    <property type="evidence" value="ECO:0007669"/>
    <property type="project" value="UniProtKB-ARBA"/>
</dbReference>
<dbReference type="GO" id="GO:0005524">
    <property type="term" value="F:ATP binding"/>
    <property type="evidence" value="ECO:0007669"/>
    <property type="project" value="UniProtKB-KW"/>
</dbReference>
<dbReference type="GO" id="GO:0003682">
    <property type="term" value="F:chromatin binding"/>
    <property type="evidence" value="ECO:0000250"/>
    <property type="project" value="UniProtKB"/>
</dbReference>
<dbReference type="GO" id="GO:0003677">
    <property type="term" value="F:DNA binding"/>
    <property type="evidence" value="ECO:0000318"/>
    <property type="project" value="GO_Central"/>
</dbReference>
<dbReference type="GO" id="GO:0004386">
    <property type="term" value="F:helicase activity"/>
    <property type="evidence" value="ECO:0007669"/>
    <property type="project" value="UniProtKB-KW"/>
</dbReference>
<dbReference type="GO" id="GO:0042393">
    <property type="term" value="F:histone binding"/>
    <property type="evidence" value="ECO:0007669"/>
    <property type="project" value="InterPro"/>
</dbReference>
<dbReference type="GO" id="GO:0016787">
    <property type="term" value="F:hydrolase activity"/>
    <property type="evidence" value="ECO:0007669"/>
    <property type="project" value="UniProtKB-KW"/>
</dbReference>
<dbReference type="GO" id="GO:0140750">
    <property type="term" value="F:nucleosome array spacer activity"/>
    <property type="evidence" value="ECO:0000318"/>
    <property type="project" value="GO_Central"/>
</dbReference>
<dbReference type="GO" id="GO:0003723">
    <property type="term" value="F:RNA binding"/>
    <property type="evidence" value="ECO:0007669"/>
    <property type="project" value="UniProtKB-KW"/>
</dbReference>
<dbReference type="GO" id="GO:0007399">
    <property type="term" value="P:nervous system development"/>
    <property type="evidence" value="ECO:0007669"/>
    <property type="project" value="UniProtKB-KW"/>
</dbReference>
<dbReference type="GO" id="GO:0045944">
    <property type="term" value="P:positive regulation of transcription by RNA polymerase II"/>
    <property type="evidence" value="ECO:0000250"/>
    <property type="project" value="UniProtKB"/>
</dbReference>
<dbReference type="CDD" id="cd05516">
    <property type="entry name" value="Bromo_SNF2L2"/>
    <property type="match status" value="1"/>
</dbReference>
<dbReference type="CDD" id="cd18062">
    <property type="entry name" value="DEXHc_SMARCA4"/>
    <property type="match status" value="1"/>
</dbReference>
<dbReference type="CDD" id="cd18793">
    <property type="entry name" value="SF2_C_SNF"/>
    <property type="match status" value="1"/>
</dbReference>
<dbReference type="FunFam" id="3.40.50.10810:FF:000008">
    <property type="entry name" value="Chromatin structure-remodeling complex subunit snf21"/>
    <property type="match status" value="1"/>
</dbReference>
<dbReference type="FunFam" id="1.20.920.10:FF:000004">
    <property type="entry name" value="probable global transcription activator SNF2L2 isoform X1"/>
    <property type="match status" value="1"/>
</dbReference>
<dbReference type="FunFam" id="3.40.5.120:FF:000001">
    <property type="entry name" value="probable global transcription activator SNF2L2 isoform X1"/>
    <property type="match status" value="1"/>
</dbReference>
<dbReference type="FunFam" id="1.20.5.170:FF:000089">
    <property type="entry name" value="Putative global transcription activator SNF2L2"/>
    <property type="match status" value="1"/>
</dbReference>
<dbReference type="FunFam" id="3.40.50.300:FF:003020">
    <property type="entry name" value="SNF2-related domain-containing protein"/>
    <property type="match status" value="1"/>
</dbReference>
<dbReference type="Gene3D" id="1.20.5.170">
    <property type="match status" value="1"/>
</dbReference>
<dbReference type="Gene3D" id="3.40.5.120">
    <property type="match status" value="1"/>
</dbReference>
<dbReference type="Gene3D" id="1.20.920.10">
    <property type="entry name" value="Bromodomain-like"/>
    <property type="match status" value="1"/>
</dbReference>
<dbReference type="Gene3D" id="3.40.50.300">
    <property type="entry name" value="P-loop containing nucleotide triphosphate hydrolases"/>
    <property type="match status" value="1"/>
</dbReference>
<dbReference type="Gene3D" id="3.40.50.10810">
    <property type="entry name" value="Tandem AAA-ATPase domain"/>
    <property type="match status" value="1"/>
</dbReference>
<dbReference type="InterPro" id="IPR030100">
    <property type="entry name" value="BRG1_ATP-bd"/>
</dbReference>
<dbReference type="InterPro" id="IPR006576">
    <property type="entry name" value="BRK_domain"/>
</dbReference>
<dbReference type="InterPro" id="IPR037259">
    <property type="entry name" value="BRK_sf"/>
</dbReference>
<dbReference type="InterPro" id="IPR001487">
    <property type="entry name" value="Bromodomain"/>
</dbReference>
<dbReference type="InterPro" id="IPR036427">
    <property type="entry name" value="Bromodomain-like_sf"/>
</dbReference>
<dbReference type="InterPro" id="IPR018359">
    <property type="entry name" value="Bromodomain_CS"/>
</dbReference>
<dbReference type="InterPro" id="IPR014978">
    <property type="entry name" value="Gln-Leu-Gln_QLQ"/>
</dbReference>
<dbReference type="InterPro" id="IPR014001">
    <property type="entry name" value="Helicase_ATP-bd"/>
</dbReference>
<dbReference type="InterPro" id="IPR001650">
    <property type="entry name" value="Helicase_C-like"/>
</dbReference>
<dbReference type="InterPro" id="IPR014012">
    <property type="entry name" value="HSA_dom"/>
</dbReference>
<dbReference type="InterPro" id="IPR027417">
    <property type="entry name" value="P-loop_NTPase"/>
</dbReference>
<dbReference type="InterPro" id="IPR029295">
    <property type="entry name" value="SnAC"/>
</dbReference>
<dbReference type="InterPro" id="IPR038718">
    <property type="entry name" value="SNF2-like_sf"/>
</dbReference>
<dbReference type="InterPro" id="IPR049730">
    <property type="entry name" value="SNF2/RAD54-like_C"/>
</dbReference>
<dbReference type="InterPro" id="IPR000330">
    <property type="entry name" value="SNF2_N"/>
</dbReference>
<dbReference type="PANTHER" id="PTHR10799">
    <property type="entry name" value="SNF2/RAD54 HELICASE FAMILY"/>
    <property type="match status" value="1"/>
</dbReference>
<dbReference type="Pfam" id="PF07533">
    <property type="entry name" value="BRK"/>
    <property type="match status" value="1"/>
</dbReference>
<dbReference type="Pfam" id="PF00439">
    <property type="entry name" value="Bromodomain"/>
    <property type="match status" value="1"/>
</dbReference>
<dbReference type="Pfam" id="PF00271">
    <property type="entry name" value="Helicase_C"/>
    <property type="match status" value="1"/>
</dbReference>
<dbReference type="Pfam" id="PF07529">
    <property type="entry name" value="HSA"/>
    <property type="match status" value="1"/>
</dbReference>
<dbReference type="Pfam" id="PF08880">
    <property type="entry name" value="QLQ"/>
    <property type="match status" value="1"/>
</dbReference>
<dbReference type="Pfam" id="PF14619">
    <property type="entry name" value="SnAC"/>
    <property type="match status" value="1"/>
</dbReference>
<dbReference type="Pfam" id="PF00176">
    <property type="entry name" value="SNF2-rel_dom"/>
    <property type="match status" value="1"/>
</dbReference>
<dbReference type="PRINTS" id="PR00503">
    <property type="entry name" value="BROMODOMAIN"/>
</dbReference>
<dbReference type="SMART" id="SM00592">
    <property type="entry name" value="BRK"/>
    <property type="match status" value="1"/>
</dbReference>
<dbReference type="SMART" id="SM00297">
    <property type="entry name" value="BROMO"/>
    <property type="match status" value="1"/>
</dbReference>
<dbReference type="SMART" id="SM00487">
    <property type="entry name" value="DEXDc"/>
    <property type="match status" value="1"/>
</dbReference>
<dbReference type="SMART" id="SM00490">
    <property type="entry name" value="HELICc"/>
    <property type="match status" value="1"/>
</dbReference>
<dbReference type="SMART" id="SM00573">
    <property type="entry name" value="HSA"/>
    <property type="match status" value="1"/>
</dbReference>
<dbReference type="SMART" id="SM00951">
    <property type="entry name" value="QLQ"/>
    <property type="match status" value="1"/>
</dbReference>
<dbReference type="SMART" id="SM01314">
    <property type="entry name" value="SnAC"/>
    <property type="match status" value="1"/>
</dbReference>
<dbReference type="SUPFAM" id="SSF160481">
    <property type="entry name" value="BRK domain-like"/>
    <property type="match status" value="1"/>
</dbReference>
<dbReference type="SUPFAM" id="SSF47370">
    <property type="entry name" value="Bromodomain"/>
    <property type="match status" value="1"/>
</dbReference>
<dbReference type="SUPFAM" id="SSF52540">
    <property type="entry name" value="P-loop containing nucleoside triphosphate hydrolases"/>
    <property type="match status" value="2"/>
</dbReference>
<dbReference type="PROSITE" id="PS00633">
    <property type="entry name" value="BROMODOMAIN_1"/>
    <property type="match status" value="1"/>
</dbReference>
<dbReference type="PROSITE" id="PS50014">
    <property type="entry name" value="BROMODOMAIN_2"/>
    <property type="match status" value="1"/>
</dbReference>
<dbReference type="PROSITE" id="PS51192">
    <property type="entry name" value="HELICASE_ATP_BIND_1"/>
    <property type="match status" value="1"/>
</dbReference>
<dbReference type="PROSITE" id="PS51194">
    <property type="entry name" value="HELICASE_CTER"/>
    <property type="match status" value="1"/>
</dbReference>
<dbReference type="PROSITE" id="PS51204">
    <property type="entry name" value="HSA"/>
    <property type="match status" value="1"/>
</dbReference>
<dbReference type="PROSITE" id="PS51666">
    <property type="entry name" value="QLQ"/>
    <property type="match status" value="1"/>
</dbReference>
<evidence type="ECO:0000250" key="1"/>
<evidence type="ECO:0000250" key="2">
    <source>
        <dbReference type="UniProtKB" id="P51532"/>
    </source>
</evidence>
<evidence type="ECO:0000250" key="3">
    <source>
        <dbReference type="UniProtKB" id="Q3TKT4"/>
    </source>
</evidence>
<evidence type="ECO:0000250" key="4">
    <source>
        <dbReference type="UniProtKB" id="Q6DIC0"/>
    </source>
</evidence>
<evidence type="ECO:0000255" key="5">
    <source>
        <dbReference type="PROSITE-ProRule" id="PRU00035"/>
    </source>
</evidence>
<evidence type="ECO:0000255" key="6">
    <source>
        <dbReference type="PROSITE-ProRule" id="PRU00541"/>
    </source>
</evidence>
<evidence type="ECO:0000255" key="7">
    <source>
        <dbReference type="PROSITE-ProRule" id="PRU00542"/>
    </source>
</evidence>
<evidence type="ECO:0000255" key="8">
    <source>
        <dbReference type="PROSITE-ProRule" id="PRU00549"/>
    </source>
</evidence>
<evidence type="ECO:0000255" key="9">
    <source>
        <dbReference type="PROSITE-ProRule" id="PRU01001"/>
    </source>
</evidence>
<evidence type="ECO:0000256" key="10">
    <source>
        <dbReference type="SAM" id="MobiDB-lite"/>
    </source>
</evidence>
<evidence type="ECO:0000305" key="11"/>
<feature type="chain" id="PRO_0000391342" description="SWI/SNF-related matrix-associated actin-dependent regulator of chromatin subfamily A member 4">
    <location>
        <begin position="1"/>
        <end position="1606"/>
    </location>
</feature>
<feature type="domain" description="QLQ" evidence="9">
    <location>
        <begin position="171"/>
        <end position="206"/>
    </location>
</feature>
<feature type="domain" description="HSA" evidence="8">
    <location>
        <begin position="452"/>
        <end position="524"/>
    </location>
</feature>
<feature type="domain" description="Helicase ATP-binding" evidence="6">
    <location>
        <begin position="758"/>
        <end position="923"/>
    </location>
</feature>
<feature type="domain" description="Helicase C-terminal" evidence="7">
    <location>
        <begin position="1076"/>
        <end position="1238"/>
    </location>
</feature>
<feature type="domain" description="Bromo" evidence="5">
    <location>
        <begin position="1412"/>
        <end position="1523"/>
    </location>
</feature>
<feature type="region of interest" description="Necessary for interaction with SS18L1/CREST" evidence="1">
    <location>
        <begin position="1"/>
        <end position="274"/>
    </location>
</feature>
<feature type="region of interest" description="Disordered" evidence="10">
    <location>
        <begin position="1"/>
        <end position="173"/>
    </location>
</feature>
<feature type="region of interest" description="Disordered" evidence="10">
    <location>
        <begin position="206"/>
        <end position="344"/>
    </location>
</feature>
<feature type="region of interest" description="RNA-binding region which is sufficient for binding to lncRNA Evf2" evidence="3">
    <location>
        <begin position="454"/>
        <end position="720"/>
    </location>
</feature>
<feature type="region of interest" description="Disordered" evidence="10">
    <location>
        <begin position="569"/>
        <end position="602"/>
    </location>
</feature>
<feature type="region of interest" description="Disordered" evidence="10">
    <location>
        <begin position="639"/>
        <end position="691"/>
    </location>
</feature>
<feature type="region of interest" description="Sufficient for interaction with DLX1" evidence="3">
    <location>
        <begin position="829"/>
        <end position="908"/>
    </location>
</feature>
<feature type="region of interest" description="Sufficient for interaction with DLX1" evidence="3">
    <location>
        <begin position="1239"/>
        <end position="1405"/>
    </location>
</feature>
<feature type="region of interest" description="Disordered" evidence="10">
    <location>
        <begin position="1356"/>
        <end position="1419"/>
    </location>
</feature>
<feature type="region of interest" description="Disordered" evidence="10">
    <location>
        <begin position="1523"/>
        <end position="1606"/>
    </location>
</feature>
<feature type="short sequence motif" description="DEGH box" evidence="1">
    <location>
        <begin position="873"/>
        <end position="876"/>
    </location>
</feature>
<feature type="short sequence motif" description="KIKL" evidence="2">
    <location>
        <begin position="1555"/>
        <end position="1558"/>
    </location>
</feature>
<feature type="compositionally biased region" description="Pro residues" evidence="10">
    <location>
        <begin position="13"/>
        <end position="23"/>
    </location>
</feature>
<feature type="compositionally biased region" description="Low complexity" evidence="10">
    <location>
        <begin position="24"/>
        <end position="45"/>
    </location>
</feature>
<feature type="compositionally biased region" description="Basic and acidic residues" evidence="10">
    <location>
        <begin position="74"/>
        <end position="89"/>
    </location>
</feature>
<feature type="compositionally biased region" description="Low complexity" evidence="10">
    <location>
        <begin position="130"/>
        <end position="147"/>
    </location>
</feature>
<feature type="compositionally biased region" description="Polar residues" evidence="10">
    <location>
        <begin position="162"/>
        <end position="173"/>
    </location>
</feature>
<feature type="compositionally biased region" description="Pro residues" evidence="10">
    <location>
        <begin position="231"/>
        <end position="241"/>
    </location>
</feature>
<feature type="compositionally biased region" description="Pro residues" evidence="10">
    <location>
        <begin position="251"/>
        <end position="278"/>
    </location>
</feature>
<feature type="compositionally biased region" description="Pro residues" evidence="10">
    <location>
        <begin position="294"/>
        <end position="319"/>
    </location>
</feature>
<feature type="compositionally biased region" description="Basic residues" evidence="10">
    <location>
        <begin position="571"/>
        <end position="580"/>
    </location>
</feature>
<feature type="compositionally biased region" description="Acidic residues" evidence="10">
    <location>
        <begin position="650"/>
        <end position="665"/>
    </location>
</feature>
<feature type="compositionally biased region" description="Basic and acidic residues" evidence="10">
    <location>
        <begin position="1388"/>
        <end position="1397"/>
    </location>
</feature>
<feature type="compositionally biased region" description="Acidic residues" evidence="10">
    <location>
        <begin position="1526"/>
        <end position="1546"/>
    </location>
</feature>
<feature type="compositionally biased region" description="Basic and acidic residues" evidence="10">
    <location>
        <begin position="1559"/>
        <end position="1569"/>
    </location>
</feature>
<feature type="compositionally biased region" description="Basic residues" evidence="10">
    <location>
        <begin position="1570"/>
        <end position="1580"/>
    </location>
</feature>
<feature type="compositionally biased region" description="Acidic residues" evidence="10">
    <location>
        <begin position="1586"/>
        <end position="1596"/>
    </location>
</feature>
<feature type="binding site" evidence="6">
    <location>
        <begin position="771"/>
        <end position="778"/>
    </location>
    <ligand>
        <name>ATP</name>
        <dbReference type="ChEBI" id="CHEBI:30616"/>
    </ligand>
</feature>
<feature type="site" description="Required for binding to 'Lys-15'-acetylated histone 3" evidence="1">
    <location>
        <begin position="1498"/>
        <end position="1499"/>
    </location>
</feature>
<feature type="modified residue" description="Phosphothreonine" evidence="2">
    <location>
        <position position="11"/>
    </location>
</feature>
<feature type="modified residue" description="N6-acetyllysine" evidence="2">
    <location>
        <position position="188"/>
    </location>
</feature>
<feature type="modified residue" description="Phosphothreonine" evidence="2">
    <location>
        <position position="345"/>
    </location>
</feature>
<feature type="modified residue" description="Phosphothreonine" evidence="2">
    <location>
        <position position="601"/>
    </location>
</feature>
<feature type="modified residue" description="Phosphoserine" evidence="2">
    <location>
        <position position="602"/>
    </location>
</feature>
<feature type="modified residue" description="Phosphoserine" evidence="2">
    <location>
        <position position="605"/>
    </location>
</feature>
<feature type="modified residue" description="N6-acetyllysine" evidence="4">
    <location>
        <position position="618"/>
    </location>
</feature>
<feature type="modified residue" description="Phosphoserine" evidence="2">
    <location>
        <position position="687"/>
    </location>
</feature>
<feature type="modified residue" description="Phosphoserine" evidence="2">
    <location>
        <position position="691"/>
    </location>
</feature>
<feature type="modified residue" description="Phosphoserine" evidence="2">
    <location>
        <position position="1341"/>
    </location>
</feature>
<feature type="modified residue" description="Phosphothreonine" evidence="3">
    <location>
        <position position="1382"/>
    </location>
</feature>
<feature type="modified residue" description="Phosphoserine" evidence="2">
    <location>
        <position position="1411"/>
    </location>
</feature>
<feature type="modified residue" description="Phosphoserine" evidence="2">
    <location>
        <position position="1529"/>
    </location>
</feature>
<feature type="modified residue" description="Phosphoserine" evidence="2">
    <location>
        <position position="1534"/>
    </location>
</feature>
<feature type="modified residue" description="Phosphoserine" evidence="2">
    <location>
        <position position="1545"/>
    </location>
</feature>
<feature type="modified residue" description="Phosphoserine" evidence="2">
    <location>
        <position position="1586"/>
    </location>
</feature>
<feature type="modified residue" description="Phosphoserine" evidence="2">
    <location>
        <position position="1590"/>
    </location>
</feature>
<feature type="cross-link" description="Glycyl lysine isopeptide (Lys-Gly) (interchain with G-Cter in SUMO2)" evidence="2">
    <location>
        <position position="1324"/>
    </location>
</feature>
<keyword id="KW-0007">Acetylation</keyword>
<keyword id="KW-0010">Activator</keyword>
<keyword id="KW-0103">Bromodomain</keyword>
<keyword id="KW-0156">Chromatin regulator</keyword>
<keyword id="KW-0378">Hydrolase</keyword>
<keyword id="KW-1017">Isopeptide bond</keyword>
<keyword id="KW-0524">Neurogenesis</keyword>
<keyword id="KW-0539">Nucleus</keyword>
<keyword id="KW-0597">Phosphoprotein</keyword>
<keyword id="KW-1185">Reference proteome</keyword>
<keyword id="KW-0678">Repressor</keyword>
<keyword id="KW-0694">RNA-binding</keyword>
<keyword id="KW-0804">Transcription</keyword>
<keyword id="KW-0805">Transcription regulation</keyword>
<keyword id="KW-0832">Ubl conjugation</keyword>
<comment type="function">
    <text evidence="2 3">ATPase involved in transcriptional activation and repression of select genes by chromatin remodeling (alteration of DNA-nucleosome topology). Component of SWI/SNF chromatin remodeling complexes that carry out key enzymatic activities, changing chromatin structure by altering DNA-histone contacts within a nucleosome in an ATP-dependent manner. Component of the CREST-BRG1 complex, a multiprotein complex that regulates promoter activation by orchestrating the calcium-dependent release of a repressor complex and the recruitment of an activator complex. In resting neurons, transcription of the c-FOS promoter is inhibited by SMARCA4-dependent recruitment of a phospho-RB1-HDAC repressor complex. Upon calcium influx, RB1 is dephosphorylated by calcineurin, which leads to release of the repressor complex. At the same time, there is increased recruitment of CREBBP to the promoter by a CREST-dependent mechanism, which leads to transcriptional activation. The CREST-BRG1 complex also binds to the NR2B promoter, and activity-dependent induction of NR2B expression involves the release of HDAC1 and recruitment of CREBBP. Belongs to the neural progenitors-specific chromatin remodeling complex (npBAF complex) and the neuron-specific chromatin remodeling complex (nBAF complex). During neural development, a switch from a stem/progenitor to a postmitotic chromatin remodeling mechanism occurs as neurons exit the cell cycle and become committed to their adult state. The transition from proliferating neural stem/progenitor cells to postmitotic neurons requires a switch in subunit composition of the npBAF and nBAF complexes. As neural progenitors exit mitosis and differentiate into neurons, npBAF complexes which contain ACTL6A/BAF53A and PHF10/BAF45A, are exchanged for homologous alternative ACTL6B/BAF53B and DPF1/BAF45B or DPF3/BAF45C subunits in neuron-specific complexes (nBAF). The npBAF complex is essential for the self-renewal/proliferative capacity of the multipotent neural stem cells. The nBAF complex along with CREST plays a role regulating the activity of genes essential for dendrite growth. SMARCA4/BAF190A may promote neural stem cell self-renewal/proliferation by enhancing Notch-dependent proliferative signals, while concurrently making the neural stem cell insensitive to SHH-dependent differentiating cues (By similarity). Acts as a corepressor of ZEB1 to regulate E-cadherin transcription and is required for induction of epithelial-mesenchymal transition (EMT) by ZEB1. Binds via DLX1 to enhancers located in the intergenic region between DLX5 and DLX6 and this binding is stabilized by the long non-coding RNA (lncRNA) Evf2 (By similarity). Binds to RNA in a promiscuous manner (By similarity). Binding to RNAs including lncRNA Evf2 leads to inhibition of SMARCA4 ATPase and chromatin remodeling activities (By similarity). In brown adipose tissue, involved in the regulation of thermogenic genes expression (By similarity).</text>
</comment>
<comment type="catalytic activity">
    <reaction evidence="2">
        <text>ATP + H2O = ADP + phosphate + H(+)</text>
        <dbReference type="Rhea" id="RHEA:13065"/>
        <dbReference type="ChEBI" id="CHEBI:15377"/>
        <dbReference type="ChEBI" id="CHEBI:15378"/>
        <dbReference type="ChEBI" id="CHEBI:30616"/>
        <dbReference type="ChEBI" id="CHEBI:43474"/>
        <dbReference type="ChEBI" id="CHEBI:456216"/>
    </reaction>
    <physiologicalReaction direction="left-to-right" evidence="2">
        <dbReference type="Rhea" id="RHEA:13066"/>
    </physiologicalReaction>
</comment>
<comment type="activity regulation">
    <text evidence="3">Binding to RNAs including lncRNA Evf2 leads to inhibition of SMARCA4 ATPase and chromatin remodeling activities.</text>
</comment>
<comment type="subunit">
    <text evidence="2 3">Component of the multiprotein chromatin-remodeling complexes SWI/SNF: SWI/SNF-A (BAF), SWI/SNF-B (PBAF) and related complexes. The canonical complex contains a catalytic subunit (either SMARCA4/BRG1/BAF190A or SMARCA2/BRM/BAF190B) and at least SMARCE1, ACTL6A/BAF53, SMARCC1/BAF155, SMARCC2/BAF170, and SMARCB1/SNF5/BAF47. Other subunits specific to each of the complexes may also be present permitting several possible developmental- and tissue-specific combinations. Component of the BAF complex, which includes at least actin (ACTB), ARID1A/BAF250A, ARID1B/BAF250B, SMARCA2/BRM, SMARCA4/BRG1/BAF190A, ACTL6A/BAF53, ACTL6B/BAF53B, SMARCE1/BAF57, SMARCC1/BAF155, SMARCC2/BAF170, SMARCB1/SNF5/INI1, and one or more SMARCD1/BAF60A, SMARCD2/BAF60B, or SMARCD3/BAF60C. In muscle cells, the BAF complex also contains DPF3. Component of neural progenitors-specific chromatin remodeling complex (npBAF complex) composed of at least, ARID1A/BAF250A or ARID1B/BAF250B, SMARCD1/BAF60A, SMARCD3/BAF60C, SMARCA2/BRM/BAF190B, SMARCA4/BRG1/BAF190A, SMARCB1/BAF47, SMARCC1/BAF155, SMARCE1/BAF57, SMARCC2/BAF170, PHF10/BAF45A, ACTL6A/BAF53A and actin. Component of neuron-specific chromatin remodeling complex (nBAF complex) composed of at least, ARID1A/BAF250A or ARID1B/BAF250B, SMARCD1/BAF60A, SMARCD3/BAF60C, SMARCA2/BRM/BAF190B, SMARCA4/BRG1/BAF190A, SMARCB1/BAF47, SMARCC1/BAF155, SMARCE1/BAF57, SMARCC2/BAF170, DPF1/BAF45B, DPF3/BAF45C, ACTL6B/BAF53B and actin. Component of the SWI/SNF-B (PBAF) chromatin remodeling complex, at least composed of SMARCA4/BRG1, SMARCB1/BAF47/SNF5, ACTL6A/BAF53A or ACTL6B/BAF53B, SMARCE1/BAF57, SMARCD1/BAF60A, SMARCD2/BAF60B, perhaps SMARCD3/BAF60C, SMARCC1/BAF155, SMARCC2/BAF170, PBRM1/BAF180, ARID2/BAF200 and actin. Component of SWI/SNF (GBAF) subcomplex, which includes at least BICRA or BICRAL (mutually exclusive), BRD9, SS18, SMARCA2/BRM, SMARCA4/BRG1/BAF190A, ACTL6A/BAF53, SMARCC1/BAF155, and SMARCD1/BAF60A. Component of the BAF53 complex, at least composed of BAF53A, RUVBL1, SMARCA4/BRG1/BAF190A, and TRRAP, which preferentially acetylates histone H4 (and H2A) within nucleosomes (By similarity). Component of the CREST-BRG1 complex, at least composed of SMARCA4/BRG1/BAF190A, SS18L1/CREST, HDAC1, RB1 and SP1 (By similarity). Interacts with PHF10/BAF45A (By similarity). Interacts with MYOG (By similarity). Interacts directly with IKFZ1; the interaction associates IKFZ1 with the BAF complex. Interacts with ZEB1 (via N-terminus). Interacts with NR3C1, PGR, SMARD1, TOPBP1 and ZMIM2/ZIMP7. Interacts with (via the bromodomain) with TERT; the interaction regulates Wnt-mediated signaling (By similarity). Interacts with TBX21 in a KDM6B-dependent manner (By similarity). Interacts with KDM6A and KDM6B (By similarity). Interacts with HNRNPU; this interaction occurs in embryonic stem cells and stimulates global Pol II-mediated transcription (By similarity). Interacts with ACTL6A (By similarity). Interacts with DLX1 (By similarity). Interacts with DPF2. Interacts with DPF3a (isoform 2 of DPF3/BAF45C) and with HDGFL2 in a DPF3a-dependent manner. May interact with ADNP2 (By similarity). Interacts with LETMD1 (via C-terminal); the interaction regulates transcriptional expression of thermogenic genes in brown adipose tissue (By similarity). Interacts (via KIKL motif) with BRD3 (via NET domain) (By similarity).</text>
</comment>
<comment type="subcellular location">
    <subcellularLocation>
        <location evidence="3">Nucleus</location>
    </subcellularLocation>
    <text evidence="2 3">Colocalizes with long non-coding RNA Evf2 in nuclear RNA clouds (By similarity). Localizes to sites of DNA damage (By similarity).</text>
</comment>
<comment type="domain">
    <text evidence="2">The KIKL motif recognizes and binds the NET domain of BRD3.</text>
</comment>
<comment type="similarity">
    <text evidence="11">Belongs to the SNF2/RAD54 helicase family.</text>
</comment>
<reference key="1">
    <citation type="submission" date="2007-09" db="EMBL/GenBank/DDBJ databases">
        <authorList>
            <consortium name="NIH - Mammalian Gene Collection (MGC) project"/>
        </authorList>
    </citation>
    <scope>NUCLEOTIDE SEQUENCE [LARGE SCALE MRNA]</scope>
    <source>
        <strain>Hereford</strain>
        <tissue>Fetal cerebellum</tissue>
    </source>
</reference>
<gene>
    <name type="primary">SMARCA4</name>
    <name type="synonym">BAF190A</name>
    <name type="synonym">BRG1</name>
    <name type="synonym">SNF2B</name>
    <name type="synonym">SNF2L4</name>
</gene>
<name>SMCA4_BOVIN</name>
<protein>
    <recommendedName>
        <fullName>SWI/SNF-related matrix-associated actin-dependent regulator of chromatin subfamily A member 4</fullName>
        <shortName>SMARCA4</shortName>
        <ecNumber evidence="2">3.6.4.-</ecNumber>
    </recommendedName>
    <alternativeName>
        <fullName>BRG1-associated factor 190A</fullName>
        <shortName>BAF190A</shortName>
    </alternativeName>
    <alternativeName>
        <fullName>Protein brahma homolog 1</fullName>
    </alternativeName>
    <alternativeName>
        <fullName>SNF2-beta</fullName>
    </alternativeName>
    <alternativeName>
        <fullName>Transcription activator BRG1</fullName>
    </alternativeName>
</protein>
<proteinExistence type="evidence at transcript level"/>